<sequence>MAETERLMPNGGSRETKPLITGHLILGTIVACLGSIQYGYHIAELNAPQEFLSCSRFEAPDENISYDDTWVGQHGLKQCIALTDSQYGAITSIFSIGGLFGSYYAGNWANRYGRKYVSMGASAMCMVSSLLLFFSNSYLQLLFGRFLVGMSCGTAIVITPLFINEIAPVEWRGAMGSMNQVSINLGILLTQTLALKYADSYNWRWLLFSGSVIAVANILAWLKVDESPRWLVSHGFVSEAETALFKLRPGTYQQAKQEIQDWQRSHGHNRDPESSEETHSGPTLWQYVTDPSYKKPRTVILAILSCQQFCGINSIIFYGVKVIGKILPDYSIQVNFAISILNVVVTLAASAIIDHVGRRPLLLASTTVMTAMSLLISVGLTLSVSFLLVTATFVYIAAFAIGLGPIPFLIIGELSYPQDAATAQSFGTVCNWLATFIVGYLFPIGHGLMGGYVFAIFAAIAAMFATYVYKRVPETKGKTTYSEVWAGY</sequence>
<dbReference type="EMBL" id="Z36110">
    <property type="protein sequence ID" value="CAA85204.1"/>
    <property type="molecule type" value="Genomic_DNA"/>
</dbReference>
<dbReference type="EMBL" id="AY692595">
    <property type="protein sequence ID" value="AAT92614.1"/>
    <property type="molecule type" value="Genomic_DNA"/>
</dbReference>
<dbReference type="EMBL" id="BK006936">
    <property type="protein sequence ID" value="DAA07357.1"/>
    <property type="molecule type" value="Genomic_DNA"/>
</dbReference>
<dbReference type="PIR" id="S46118">
    <property type="entry name" value="S46118"/>
</dbReference>
<dbReference type="SMR" id="P38142"/>
<dbReference type="BioGRID" id="32936">
    <property type="interactions" value="34"/>
</dbReference>
<dbReference type="DIP" id="DIP-5363N"/>
<dbReference type="FunCoup" id="P38142">
    <property type="interactions" value="871"/>
</dbReference>
<dbReference type="IntAct" id="P38142">
    <property type="interactions" value="10"/>
</dbReference>
<dbReference type="MINT" id="P38142"/>
<dbReference type="STRING" id="4932.YBR241C"/>
<dbReference type="TCDB" id="2.A.1.1.96">
    <property type="family name" value="the major facilitator superfamily (mfs)"/>
</dbReference>
<dbReference type="GlyGen" id="P38142">
    <property type="glycosylation" value="1 site"/>
</dbReference>
<dbReference type="iPTMnet" id="P38142"/>
<dbReference type="PaxDb" id="4932-YBR241C"/>
<dbReference type="PeptideAtlas" id="P38142"/>
<dbReference type="EnsemblFungi" id="YBR241C_mRNA">
    <property type="protein sequence ID" value="YBR241C"/>
    <property type="gene ID" value="YBR241C"/>
</dbReference>
<dbReference type="KEGG" id="sce:YBR241C"/>
<dbReference type="AGR" id="SGD:S000000445"/>
<dbReference type="SGD" id="S000000445">
    <property type="gene designation" value="YBR241C"/>
</dbReference>
<dbReference type="VEuPathDB" id="FungiDB:YBR241C"/>
<dbReference type="eggNOG" id="KOG0569">
    <property type="taxonomic scope" value="Eukaryota"/>
</dbReference>
<dbReference type="GeneTree" id="ENSGT00940000166877"/>
<dbReference type="HOGENOM" id="CLU_001265_30_5_1"/>
<dbReference type="InParanoid" id="P38142"/>
<dbReference type="OMA" id="WAITASF"/>
<dbReference type="OrthoDB" id="4540492at2759"/>
<dbReference type="BioCyc" id="YEAST:G3O-29172-MONOMER"/>
<dbReference type="Reactome" id="R-SCE-189200">
    <property type="pathway name" value="Cellular hexose transport"/>
</dbReference>
<dbReference type="Reactome" id="R-SCE-196836">
    <property type="pathway name" value="Vitamin C (ascorbate) metabolism"/>
</dbReference>
<dbReference type="Reactome" id="R-SCE-422356">
    <property type="pathway name" value="Regulation of insulin secretion"/>
</dbReference>
<dbReference type="Reactome" id="R-SCE-5653890">
    <property type="pathway name" value="Lactose synthesis"/>
</dbReference>
<dbReference type="Reactome" id="R-SCE-6798695">
    <property type="pathway name" value="Neutrophil degranulation"/>
</dbReference>
<dbReference type="Reactome" id="R-SCE-8981373">
    <property type="pathway name" value="Intestinal hexose absorption"/>
</dbReference>
<dbReference type="BioGRID-ORCS" id="852543">
    <property type="hits" value="4 hits in 10 CRISPR screens"/>
</dbReference>
<dbReference type="PRO" id="PR:P38142"/>
<dbReference type="Proteomes" id="UP000002311">
    <property type="component" value="Chromosome II"/>
</dbReference>
<dbReference type="RNAct" id="P38142">
    <property type="molecule type" value="protein"/>
</dbReference>
<dbReference type="GO" id="GO:0000329">
    <property type="term" value="C:fungal-type vacuole membrane"/>
    <property type="evidence" value="ECO:0000314"/>
    <property type="project" value="SGD"/>
</dbReference>
<dbReference type="GO" id="GO:0016020">
    <property type="term" value="C:membrane"/>
    <property type="evidence" value="ECO:0000318"/>
    <property type="project" value="GO_Central"/>
</dbReference>
<dbReference type="GO" id="GO:0015149">
    <property type="term" value="F:hexose transmembrane transporter activity"/>
    <property type="evidence" value="ECO:0000318"/>
    <property type="project" value="GO_Central"/>
</dbReference>
<dbReference type="GO" id="GO:0022857">
    <property type="term" value="F:transmembrane transporter activity"/>
    <property type="evidence" value="ECO:0000250"/>
    <property type="project" value="SGD"/>
</dbReference>
<dbReference type="GO" id="GO:0015749">
    <property type="term" value="P:monosaccharide transmembrane transport"/>
    <property type="evidence" value="ECO:0000318"/>
    <property type="project" value="GO_Central"/>
</dbReference>
<dbReference type="GO" id="GO:0055085">
    <property type="term" value="P:transmembrane transport"/>
    <property type="evidence" value="ECO:0000250"/>
    <property type="project" value="SGD"/>
</dbReference>
<dbReference type="CDD" id="cd17357">
    <property type="entry name" value="MFS_GLUT_Class1_2_like"/>
    <property type="match status" value="1"/>
</dbReference>
<dbReference type="FunFam" id="1.20.1250.20:FF:000598">
    <property type="entry name" value="YBR241C-like protein"/>
    <property type="match status" value="1"/>
</dbReference>
<dbReference type="Gene3D" id="1.20.1250.20">
    <property type="entry name" value="MFS general substrate transporter like domains"/>
    <property type="match status" value="1"/>
</dbReference>
<dbReference type="InterPro" id="IPR045263">
    <property type="entry name" value="GLUT"/>
</dbReference>
<dbReference type="InterPro" id="IPR020846">
    <property type="entry name" value="MFS_dom"/>
</dbReference>
<dbReference type="InterPro" id="IPR005828">
    <property type="entry name" value="MFS_sugar_transport-like"/>
</dbReference>
<dbReference type="InterPro" id="IPR036259">
    <property type="entry name" value="MFS_trans_sf"/>
</dbReference>
<dbReference type="InterPro" id="IPR003663">
    <property type="entry name" value="Sugar/inositol_transpt"/>
</dbReference>
<dbReference type="InterPro" id="IPR005829">
    <property type="entry name" value="Sugar_transporter_CS"/>
</dbReference>
<dbReference type="NCBIfam" id="TIGR00879">
    <property type="entry name" value="SP"/>
    <property type="match status" value="1"/>
</dbReference>
<dbReference type="PANTHER" id="PTHR23503:SF8">
    <property type="entry name" value="FACILITATED GLUCOSE TRANSPORTER PROTEIN 1"/>
    <property type="match status" value="1"/>
</dbReference>
<dbReference type="PANTHER" id="PTHR23503">
    <property type="entry name" value="SOLUTE CARRIER FAMILY 2"/>
    <property type="match status" value="1"/>
</dbReference>
<dbReference type="Pfam" id="PF00083">
    <property type="entry name" value="Sugar_tr"/>
    <property type="match status" value="1"/>
</dbReference>
<dbReference type="PRINTS" id="PR00171">
    <property type="entry name" value="SUGRTRNSPORT"/>
</dbReference>
<dbReference type="SUPFAM" id="SSF103473">
    <property type="entry name" value="MFS general substrate transporter"/>
    <property type="match status" value="1"/>
</dbReference>
<dbReference type="PROSITE" id="PS50850">
    <property type="entry name" value="MFS"/>
    <property type="match status" value="1"/>
</dbReference>
<dbReference type="PROSITE" id="PS00216">
    <property type="entry name" value="SUGAR_TRANSPORT_1"/>
    <property type="match status" value="1"/>
</dbReference>
<dbReference type="PROSITE" id="PS00217">
    <property type="entry name" value="SUGAR_TRANSPORT_2"/>
    <property type="match status" value="1"/>
</dbReference>
<organism>
    <name type="scientific">Saccharomyces cerevisiae (strain ATCC 204508 / S288c)</name>
    <name type="common">Baker's yeast</name>
    <dbReference type="NCBI Taxonomy" id="559292"/>
    <lineage>
        <taxon>Eukaryota</taxon>
        <taxon>Fungi</taxon>
        <taxon>Dikarya</taxon>
        <taxon>Ascomycota</taxon>
        <taxon>Saccharomycotina</taxon>
        <taxon>Saccharomycetes</taxon>
        <taxon>Saccharomycetales</taxon>
        <taxon>Saccharomycetaceae</taxon>
        <taxon>Saccharomyces</taxon>
    </lineage>
</organism>
<gene>
    <name type="ordered locus">YBR241C</name>
    <name type="ORF">YBR1625</name>
</gene>
<reference key="1">
    <citation type="journal article" date="1994" name="EMBO J.">
        <title>Complete DNA sequence of yeast chromosome II.</title>
        <authorList>
            <person name="Feldmann H."/>
            <person name="Aigle M."/>
            <person name="Aljinovic G."/>
            <person name="Andre B."/>
            <person name="Baclet M.C."/>
            <person name="Barthe C."/>
            <person name="Baur A."/>
            <person name="Becam A.-M."/>
            <person name="Biteau N."/>
            <person name="Boles E."/>
            <person name="Brandt T."/>
            <person name="Brendel M."/>
            <person name="Brueckner M."/>
            <person name="Bussereau F."/>
            <person name="Christiansen C."/>
            <person name="Contreras R."/>
            <person name="Crouzet M."/>
            <person name="Cziepluch C."/>
            <person name="Demolis N."/>
            <person name="Delaveau T."/>
            <person name="Doignon F."/>
            <person name="Domdey H."/>
            <person name="Duesterhus S."/>
            <person name="Dubois E."/>
            <person name="Dujon B."/>
            <person name="El Bakkoury M."/>
            <person name="Entian K.-D."/>
            <person name="Feuermann M."/>
            <person name="Fiers W."/>
            <person name="Fobo G.M."/>
            <person name="Fritz C."/>
            <person name="Gassenhuber J."/>
            <person name="Glansdorff N."/>
            <person name="Goffeau A."/>
            <person name="Grivell L.A."/>
            <person name="de Haan M."/>
            <person name="Hein C."/>
            <person name="Herbert C.J."/>
            <person name="Hollenberg C.P."/>
            <person name="Holmstroem K."/>
            <person name="Jacq C."/>
            <person name="Jacquet M."/>
            <person name="Jauniaux J.-C."/>
            <person name="Jonniaux J.-L."/>
            <person name="Kallesoee T."/>
            <person name="Kiesau P."/>
            <person name="Kirchrath L."/>
            <person name="Koetter P."/>
            <person name="Korol S."/>
            <person name="Liebl S."/>
            <person name="Logghe M."/>
            <person name="Lohan A.J.E."/>
            <person name="Louis E.J."/>
            <person name="Li Z.Y."/>
            <person name="Maat M.J."/>
            <person name="Mallet L."/>
            <person name="Mannhaupt G."/>
            <person name="Messenguy F."/>
            <person name="Miosga T."/>
            <person name="Molemans F."/>
            <person name="Mueller S."/>
            <person name="Nasr F."/>
            <person name="Obermaier B."/>
            <person name="Perea J."/>
            <person name="Pierard A."/>
            <person name="Piravandi E."/>
            <person name="Pohl F.M."/>
            <person name="Pohl T.M."/>
            <person name="Potier S."/>
            <person name="Proft M."/>
            <person name="Purnelle B."/>
            <person name="Ramezani Rad M."/>
            <person name="Rieger M."/>
            <person name="Rose M."/>
            <person name="Schaaff-Gerstenschlaeger I."/>
            <person name="Scherens B."/>
            <person name="Schwarzlose C."/>
            <person name="Skala J."/>
            <person name="Slonimski P.P."/>
            <person name="Smits P.H.M."/>
            <person name="Souciet J.-L."/>
            <person name="Steensma H.Y."/>
            <person name="Stucka R."/>
            <person name="Urrestarazu L.A."/>
            <person name="van der Aart Q.J.M."/>
            <person name="Van Dyck L."/>
            <person name="Vassarotti A."/>
            <person name="Vetter I."/>
            <person name="Vierendeels F."/>
            <person name="Vissers S."/>
            <person name="Wagner G."/>
            <person name="de Wergifosse P."/>
            <person name="Wolfe K.H."/>
            <person name="Zagulski M."/>
            <person name="Zimmermann F.K."/>
            <person name="Mewes H.-W."/>
            <person name="Kleine K."/>
        </authorList>
    </citation>
    <scope>NUCLEOTIDE SEQUENCE [LARGE SCALE GENOMIC DNA]</scope>
    <source>
        <strain>ATCC 204508 / S288c</strain>
    </source>
</reference>
<reference key="2">
    <citation type="journal article" date="2014" name="G3 (Bethesda)">
        <title>The reference genome sequence of Saccharomyces cerevisiae: Then and now.</title>
        <authorList>
            <person name="Engel S.R."/>
            <person name="Dietrich F.S."/>
            <person name="Fisk D.G."/>
            <person name="Binkley G."/>
            <person name="Balakrishnan R."/>
            <person name="Costanzo M.C."/>
            <person name="Dwight S.S."/>
            <person name="Hitz B.C."/>
            <person name="Karra K."/>
            <person name="Nash R.S."/>
            <person name="Weng S."/>
            <person name="Wong E.D."/>
            <person name="Lloyd P."/>
            <person name="Skrzypek M.S."/>
            <person name="Miyasato S.R."/>
            <person name="Simison M."/>
            <person name="Cherry J.M."/>
        </authorList>
    </citation>
    <scope>GENOME REANNOTATION</scope>
    <source>
        <strain>ATCC 204508 / S288c</strain>
    </source>
</reference>
<reference key="3">
    <citation type="journal article" date="2007" name="Genome Res.">
        <title>Approaching a complete repository of sequence-verified protein-encoding clones for Saccharomyces cerevisiae.</title>
        <authorList>
            <person name="Hu Y."/>
            <person name="Rolfs A."/>
            <person name="Bhullar B."/>
            <person name="Murthy T.V.S."/>
            <person name="Zhu C."/>
            <person name="Berger M.F."/>
            <person name="Camargo A.A."/>
            <person name="Kelley F."/>
            <person name="McCarron S."/>
            <person name="Jepson D."/>
            <person name="Richardson A."/>
            <person name="Raphael J."/>
            <person name="Moreira D."/>
            <person name="Taycher E."/>
            <person name="Zuo D."/>
            <person name="Mohr S."/>
            <person name="Kane M.F."/>
            <person name="Williamson J."/>
            <person name="Simpson A.J.G."/>
            <person name="Bulyk M.L."/>
            <person name="Harlow E."/>
            <person name="Marsischky G."/>
            <person name="Kolodner R.D."/>
            <person name="LaBaer J."/>
        </authorList>
    </citation>
    <scope>NUCLEOTIDE SEQUENCE [GENOMIC DNA]</scope>
    <source>
        <strain>ATCC 204508 / S288c</strain>
    </source>
</reference>
<reference key="4">
    <citation type="journal article" date="2003" name="Nature">
        <title>Global analysis of protein localization in budding yeast.</title>
        <authorList>
            <person name="Huh W.-K."/>
            <person name="Falvo J.V."/>
            <person name="Gerke L.C."/>
            <person name="Carroll A.S."/>
            <person name="Howson R.W."/>
            <person name="Weissman J.S."/>
            <person name="O'Shea E.K."/>
        </authorList>
    </citation>
    <scope>SUBCELLULAR LOCATION [LARGE SCALE ANALYSIS]</scope>
</reference>
<reference key="5">
    <citation type="journal article" date="2006" name="Proc. Natl. Acad. Sci. U.S.A.">
        <title>A global topology map of the Saccharomyces cerevisiae membrane proteome.</title>
        <authorList>
            <person name="Kim H."/>
            <person name="Melen K."/>
            <person name="Oesterberg M."/>
            <person name="von Heijne G."/>
        </authorList>
    </citation>
    <scope>TOPOLOGY [LARGE SCALE ANALYSIS]</scope>
    <source>
        <strain>ATCC 208353 / W303-1A</strain>
    </source>
</reference>
<keyword id="KW-0325">Glycoprotein</keyword>
<keyword id="KW-0472">Membrane</keyword>
<keyword id="KW-1185">Reference proteome</keyword>
<keyword id="KW-0677">Repeat</keyword>
<keyword id="KW-0812">Transmembrane</keyword>
<keyword id="KW-1133">Transmembrane helix</keyword>
<keyword id="KW-0813">Transport</keyword>
<keyword id="KW-0926">Vacuole</keyword>
<accession>P38142</accession>
<accession>D6VQN7</accession>
<accession>Q6B2Y5</accession>
<protein>
    <recommendedName>
        <fullName>Probable metabolite transport protein YBR241C</fullName>
    </recommendedName>
</protein>
<proteinExistence type="evidence at protein level"/>
<evidence type="ECO:0000255" key="1"/>
<evidence type="ECO:0000256" key="2">
    <source>
        <dbReference type="SAM" id="MobiDB-lite"/>
    </source>
</evidence>
<evidence type="ECO:0000269" key="3">
    <source>
    </source>
</evidence>
<evidence type="ECO:0000305" key="4"/>
<feature type="chain" id="PRO_0000050463" description="Probable metabolite transport protein YBR241C">
    <location>
        <begin position="1"/>
        <end position="488"/>
    </location>
</feature>
<feature type="topological domain" description="Cytoplasmic" evidence="1">
    <location>
        <begin position="1"/>
        <end position="18"/>
    </location>
</feature>
<feature type="transmembrane region" description="Helical; Name=1" evidence="1">
    <location>
        <begin position="19"/>
        <end position="39"/>
    </location>
</feature>
<feature type="topological domain" description="Vacuolar" evidence="1">
    <location>
        <begin position="40"/>
        <end position="87"/>
    </location>
</feature>
<feature type="transmembrane region" description="Helical; Name=2" evidence="1">
    <location>
        <begin position="88"/>
        <end position="108"/>
    </location>
</feature>
<feature type="topological domain" description="Cytoplasmic" evidence="1">
    <location>
        <begin position="109"/>
        <end position="121"/>
    </location>
</feature>
<feature type="transmembrane region" description="Helical; Name=3" evidence="1">
    <location>
        <begin position="122"/>
        <end position="142"/>
    </location>
</feature>
<feature type="topological domain" description="Vacuolar" evidence="1">
    <location>
        <begin position="143"/>
        <end position="146"/>
    </location>
</feature>
<feature type="transmembrane region" description="Helical; Name=4" evidence="1">
    <location>
        <begin position="147"/>
        <end position="167"/>
    </location>
</feature>
<feature type="topological domain" description="Cytoplasmic" evidence="1">
    <location>
        <begin position="168"/>
        <end position="178"/>
    </location>
</feature>
<feature type="transmembrane region" description="Helical; Name=5" evidence="1">
    <location>
        <begin position="179"/>
        <end position="198"/>
    </location>
</feature>
<feature type="topological domain" description="Vacuolar" evidence="1">
    <location>
        <begin position="199"/>
        <end position="204"/>
    </location>
</feature>
<feature type="transmembrane region" description="Helical; Name=6" evidence="1">
    <location>
        <begin position="205"/>
        <end position="225"/>
    </location>
</feature>
<feature type="topological domain" description="Cytoplasmic" evidence="1">
    <location>
        <begin position="226"/>
        <end position="299"/>
    </location>
</feature>
<feature type="transmembrane region" description="Helical; Name=7" evidence="1">
    <location>
        <begin position="300"/>
        <end position="320"/>
    </location>
</feature>
<feature type="topological domain" description="Vacuolar" evidence="1">
    <location>
        <begin position="321"/>
        <end position="322"/>
    </location>
</feature>
<feature type="transmembrane region" description="Helical; Name=8" evidence="1">
    <location>
        <begin position="323"/>
        <end position="337"/>
    </location>
</feature>
<feature type="topological domain" description="Cytoplasmic" evidence="1">
    <location>
        <begin position="338"/>
        <end position="344"/>
    </location>
</feature>
<feature type="transmembrane region" description="Helical; Name=9" evidence="1">
    <location>
        <begin position="345"/>
        <end position="364"/>
    </location>
</feature>
<feature type="topological domain" description="Vacuolar" evidence="1">
    <location>
        <begin position="365"/>
        <end position="390"/>
    </location>
</feature>
<feature type="transmembrane region" description="Helical; Name=10" evidence="1">
    <location>
        <begin position="391"/>
        <end position="411"/>
    </location>
</feature>
<feature type="topological domain" description="Cytoplasmic" evidence="1">
    <location>
        <begin position="412"/>
        <end position="419"/>
    </location>
</feature>
<feature type="transmembrane region" description="Helical; Name=11" evidence="1">
    <location>
        <begin position="420"/>
        <end position="442"/>
    </location>
</feature>
<feature type="topological domain" description="Vacuolar" evidence="1">
    <location>
        <begin position="443"/>
        <end position="446"/>
    </location>
</feature>
<feature type="transmembrane region" description="Helical; Name=12" evidence="1">
    <location>
        <begin position="447"/>
        <end position="463"/>
    </location>
</feature>
<feature type="topological domain" description="Cytoplasmic" evidence="1">
    <location>
        <begin position="464"/>
        <end position="488"/>
    </location>
</feature>
<feature type="region of interest" description="Disordered" evidence="2">
    <location>
        <begin position="258"/>
        <end position="281"/>
    </location>
</feature>
<feature type="compositionally biased region" description="Basic and acidic residues" evidence="2">
    <location>
        <begin position="258"/>
        <end position="279"/>
    </location>
</feature>
<feature type="glycosylation site" description="N-linked (GlcNAc...) asparagine" evidence="1">
    <location>
        <position position="63"/>
    </location>
</feature>
<feature type="sequence conflict" description="In Ref. 3; AAT92614." evidence="4" ref="3">
    <original>V</original>
    <variation>A</variation>
    <location>
        <position position="438"/>
    </location>
</feature>
<comment type="subcellular location">
    <subcellularLocation>
        <location evidence="3">Vacuole membrane</location>
        <topology evidence="3">Multi-pass membrane protein</topology>
    </subcellularLocation>
</comment>
<comment type="similarity">
    <text evidence="4">Belongs to the major facilitator superfamily. Sugar transporter (TC 2.A.1.1) family.</text>
</comment>
<name>YB91_YEAST</name>